<organism>
    <name type="scientific">Chloroherpeton thalassium (strain ATCC 35110 / GB-78)</name>
    <dbReference type="NCBI Taxonomy" id="517418"/>
    <lineage>
        <taxon>Bacteria</taxon>
        <taxon>Pseudomonadati</taxon>
        <taxon>Chlorobiota</taxon>
        <taxon>Chlorobiia</taxon>
        <taxon>Chlorobiales</taxon>
        <taxon>Chloroherpetonaceae</taxon>
        <taxon>Chloroherpeton</taxon>
    </lineage>
</organism>
<dbReference type="EC" id="2.5.1.7" evidence="1"/>
<dbReference type="EMBL" id="CP001100">
    <property type="protein sequence ID" value="ACF14885.1"/>
    <property type="molecule type" value="Genomic_DNA"/>
</dbReference>
<dbReference type="RefSeq" id="WP_012500967.1">
    <property type="nucleotide sequence ID" value="NC_011026.1"/>
</dbReference>
<dbReference type="SMR" id="B3QX75"/>
<dbReference type="STRING" id="517418.Ctha_2436"/>
<dbReference type="KEGG" id="cts:Ctha_2436"/>
<dbReference type="eggNOG" id="COG0766">
    <property type="taxonomic scope" value="Bacteria"/>
</dbReference>
<dbReference type="HOGENOM" id="CLU_027387_0_0_10"/>
<dbReference type="OrthoDB" id="9803760at2"/>
<dbReference type="UniPathway" id="UPA00219"/>
<dbReference type="Proteomes" id="UP000001208">
    <property type="component" value="Chromosome"/>
</dbReference>
<dbReference type="GO" id="GO:0005737">
    <property type="term" value="C:cytoplasm"/>
    <property type="evidence" value="ECO:0007669"/>
    <property type="project" value="UniProtKB-SubCell"/>
</dbReference>
<dbReference type="GO" id="GO:0008760">
    <property type="term" value="F:UDP-N-acetylglucosamine 1-carboxyvinyltransferase activity"/>
    <property type="evidence" value="ECO:0007669"/>
    <property type="project" value="UniProtKB-UniRule"/>
</dbReference>
<dbReference type="GO" id="GO:0051301">
    <property type="term" value="P:cell division"/>
    <property type="evidence" value="ECO:0007669"/>
    <property type="project" value="UniProtKB-KW"/>
</dbReference>
<dbReference type="GO" id="GO:0071555">
    <property type="term" value="P:cell wall organization"/>
    <property type="evidence" value="ECO:0007669"/>
    <property type="project" value="UniProtKB-KW"/>
</dbReference>
<dbReference type="GO" id="GO:0009252">
    <property type="term" value="P:peptidoglycan biosynthetic process"/>
    <property type="evidence" value="ECO:0007669"/>
    <property type="project" value="UniProtKB-UniRule"/>
</dbReference>
<dbReference type="GO" id="GO:0008360">
    <property type="term" value="P:regulation of cell shape"/>
    <property type="evidence" value="ECO:0007669"/>
    <property type="project" value="UniProtKB-KW"/>
</dbReference>
<dbReference type="GO" id="GO:0019277">
    <property type="term" value="P:UDP-N-acetylgalactosamine biosynthetic process"/>
    <property type="evidence" value="ECO:0007669"/>
    <property type="project" value="InterPro"/>
</dbReference>
<dbReference type="CDD" id="cd01555">
    <property type="entry name" value="UdpNAET"/>
    <property type="match status" value="1"/>
</dbReference>
<dbReference type="FunFam" id="3.65.10.10:FF:000001">
    <property type="entry name" value="UDP-N-acetylglucosamine 1-carboxyvinyltransferase"/>
    <property type="match status" value="1"/>
</dbReference>
<dbReference type="Gene3D" id="3.65.10.10">
    <property type="entry name" value="Enolpyruvate transferase domain"/>
    <property type="match status" value="2"/>
</dbReference>
<dbReference type="HAMAP" id="MF_00111">
    <property type="entry name" value="MurA"/>
    <property type="match status" value="1"/>
</dbReference>
<dbReference type="InterPro" id="IPR001986">
    <property type="entry name" value="Enolpyruvate_Tfrase_dom"/>
</dbReference>
<dbReference type="InterPro" id="IPR036968">
    <property type="entry name" value="Enolpyruvate_Tfrase_sf"/>
</dbReference>
<dbReference type="InterPro" id="IPR050068">
    <property type="entry name" value="MurA_subfamily"/>
</dbReference>
<dbReference type="InterPro" id="IPR013792">
    <property type="entry name" value="RNA3'P_cycl/enolpyr_Trfase_a/b"/>
</dbReference>
<dbReference type="InterPro" id="IPR005750">
    <property type="entry name" value="UDP_GlcNAc_COvinyl_MurA"/>
</dbReference>
<dbReference type="NCBIfam" id="TIGR01072">
    <property type="entry name" value="murA"/>
    <property type="match status" value="1"/>
</dbReference>
<dbReference type="NCBIfam" id="NF006873">
    <property type="entry name" value="PRK09369.1"/>
    <property type="match status" value="1"/>
</dbReference>
<dbReference type="PANTHER" id="PTHR43783">
    <property type="entry name" value="UDP-N-ACETYLGLUCOSAMINE 1-CARBOXYVINYLTRANSFERASE"/>
    <property type="match status" value="1"/>
</dbReference>
<dbReference type="PANTHER" id="PTHR43783:SF1">
    <property type="entry name" value="UDP-N-ACETYLGLUCOSAMINE 1-CARBOXYVINYLTRANSFERASE"/>
    <property type="match status" value="1"/>
</dbReference>
<dbReference type="Pfam" id="PF00275">
    <property type="entry name" value="EPSP_synthase"/>
    <property type="match status" value="1"/>
</dbReference>
<dbReference type="SUPFAM" id="SSF55205">
    <property type="entry name" value="EPT/RTPC-like"/>
    <property type="match status" value="1"/>
</dbReference>
<protein>
    <recommendedName>
        <fullName evidence="1">UDP-N-acetylglucosamine 1-carboxyvinyltransferase</fullName>
        <ecNumber evidence="1">2.5.1.7</ecNumber>
    </recommendedName>
    <alternativeName>
        <fullName evidence="1">Enoylpyruvate transferase</fullName>
    </alternativeName>
    <alternativeName>
        <fullName evidence="1">UDP-N-acetylglucosamine enolpyruvyl transferase</fullName>
        <shortName evidence="1">EPT</shortName>
    </alternativeName>
</protein>
<feature type="chain" id="PRO_1000094680" description="UDP-N-acetylglucosamine 1-carboxyvinyltransferase">
    <location>
        <begin position="1"/>
        <end position="429"/>
    </location>
</feature>
<feature type="active site" description="Proton donor" evidence="1">
    <location>
        <position position="117"/>
    </location>
</feature>
<feature type="binding site" evidence="1">
    <location>
        <begin position="22"/>
        <end position="23"/>
    </location>
    <ligand>
        <name>phosphoenolpyruvate</name>
        <dbReference type="ChEBI" id="CHEBI:58702"/>
    </ligand>
</feature>
<feature type="binding site" evidence="1">
    <location>
        <position position="93"/>
    </location>
    <ligand>
        <name>UDP-N-acetyl-alpha-D-glucosamine</name>
        <dbReference type="ChEBI" id="CHEBI:57705"/>
    </ligand>
</feature>
<feature type="binding site" evidence="1">
    <location>
        <begin position="122"/>
        <end position="126"/>
    </location>
    <ligand>
        <name>UDP-N-acetyl-alpha-D-glucosamine</name>
        <dbReference type="ChEBI" id="CHEBI:57705"/>
    </ligand>
</feature>
<feature type="binding site" evidence="1">
    <location>
        <position position="307"/>
    </location>
    <ligand>
        <name>UDP-N-acetyl-alpha-D-glucosamine</name>
        <dbReference type="ChEBI" id="CHEBI:57705"/>
    </ligand>
</feature>
<feature type="binding site" evidence="1">
    <location>
        <position position="329"/>
    </location>
    <ligand>
        <name>UDP-N-acetyl-alpha-D-glucosamine</name>
        <dbReference type="ChEBI" id="CHEBI:57705"/>
    </ligand>
</feature>
<feature type="modified residue" description="2-(S-cysteinyl)pyruvic acid O-phosphothioketal" evidence="1">
    <location>
        <position position="117"/>
    </location>
</feature>
<reference key="1">
    <citation type="submission" date="2008-06" db="EMBL/GenBank/DDBJ databases">
        <title>Complete sequence of Chloroherpeton thalassium ATCC 35110.</title>
        <authorList>
            <consortium name="US DOE Joint Genome Institute"/>
            <person name="Lucas S."/>
            <person name="Copeland A."/>
            <person name="Lapidus A."/>
            <person name="Glavina del Rio T."/>
            <person name="Dalin E."/>
            <person name="Tice H."/>
            <person name="Bruce D."/>
            <person name="Goodwin L."/>
            <person name="Pitluck S."/>
            <person name="Schmutz J."/>
            <person name="Larimer F."/>
            <person name="Land M."/>
            <person name="Hauser L."/>
            <person name="Kyrpides N."/>
            <person name="Mikhailova N."/>
            <person name="Liu Z."/>
            <person name="Li T."/>
            <person name="Zhao F."/>
            <person name="Overmann J."/>
            <person name="Bryant D.A."/>
            <person name="Richardson P."/>
        </authorList>
    </citation>
    <scope>NUCLEOTIDE SEQUENCE [LARGE SCALE GENOMIC DNA]</scope>
    <source>
        <strain>ATCC 35110 / GB-78</strain>
    </source>
</reference>
<accession>B3QX75</accession>
<comment type="function">
    <text evidence="1">Cell wall formation. Adds enolpyruvyl to UDP-N-acetylglucosamine.</text>
</comment>
<comment type="catalytic activity">
    <reaction evidence="1">
        <text>phosphoenolpyruvate + UDP-N-acetyl-alpha-D-glucosamine = UDP-N-acetyl-3-O-(1-carboxyvinyl)-alpha-D-glucosamine + phosphate</text>
        <dbReference type="Rhea" id="RHEA:18681"/>
        <dbReference type="ChEBI" id="CHEBI:43474"/>
        <dbReference type="ChEBI" id="CHEBI:57705"/>
        <dbReference type="ChEBI" id="CHEBI:58702"/>
        <dbReference type="ChEBI" id="CHEBI:68483"/>
        <dbReference type="EC" id="2.5.1.7"/>
    </reaction>
</comment>
<comment type="pathway">
    <text evidence="1">Cell wall biogenesis; peptidoglycan biosynthesis.</text>
</comment>
<comment type="subcellular location">
    <subcellularLocation>
        <location evidence="1">Cytoplasm</location>
    </subcellularLocation>
</comment>
<comment type="similarity">
    <text evidence="1">Belongs to the EPSP synthase family. MurA subfamily.</text>
</comment>
<proteinExistence type="inferred from homology"/>
<gene>
    <name evidence="1" type="primary">murA</name>
    <name type="ordered locus">Ctha_2436</name>
</gene>
<name>MURA_CHLT3</name>
<evidence type="ECO:0000255" key="1">
    <source>
        <dbReference type="HAMAP-Rule" id="MF_00111"/>
    </source>
</evidence>
<keyword id="KW-0131">Cell cycle</keyword>
<keyword id="KW-0132">Cell division</keyword>
<keyword id="KW-0133">Cell shape</keyword>
<keyword id="KW-0961">Cell wall biogenesis/degradation</keyword>
<keyword id="KW-0963">Cytoplasm</keyword>
<keyword id="KW-0573">Peptidoglycan synthesis</keyword>
<keyword id="KW-0670">Pyruvate</keyword>
<keyword id="KW-1185">Reference proteome</keyword>
<keyword id="KW-0808">Transferase</keyword>
<sequence>MEKLVIRGGKPLSGTVSVSGSKNSALAIMAAALLPASGKTVIHRVPNLRDVHTLSNLLRIIGAKVDFEAHTLSIASGDISHYEAPYELVKKMRASIYVLGPLLGRFGRAKVSLPGGCAFGPRPVDLHIESMKKLGADIKLEDGYIIAKTKRKGLSGAKIDFRISSVGATGNTLMAAALAKGTTCLTNAALEPEIVYLCEFLEKMGAKISGIGTTTLEIEGVDELYPIRADNICDRIEAGTLLAAAAITHGNITLTDVDPDHLTAILEKFKEIGCEVSTTETAITLSAPETLLPSNVEALPYPKFPTDMQAQWIALMTQANGISQIIDQVYTERFNHVPELNRLGGEITVKNNMATVHGVKPLSGAKVMSTDLRASASLILAGLAAKGTTEVLRVYHLDRGYESIEKKLRKLGARIRRQTYDEFAQPQLT</sequence>